<sequence length="233" mass="24520">MAKLTKRMRNIREKVEVTKQYEIAEAVALLKELATAKFVESVDVAVNLGIDARKSDQNVRGATVLPHGTGRSVRVAVFAQGANAEAAKEAGAELVGMDDLAAKVKAGEMDFDVVIASPDAMRVVGQLGQILGPRGLMPNPKVGTVTPNVAEAVKNAKAGQVRYRNDKNGIIHTTIGKVVSTKHKLKENLEALLVALKKAKPSAAKGVYIKKVSLSTTMGAGVAIDQASLSATV</sequence>
<evidence type="ECO:0000250" key="1"/>
<evidence type="ECO:0000255" key="2">
    <source>
        <dbReference type="HAMAP-Rule" id="MF_01318"/>
    </source>
</evidence>
<evidence type="ECO:0000305" key="3"/>
<accession>P10054</accession>
<feature type="initiator methionine" description="Removed" evidence="1">
    <location>
        <position position="1"/>
    </location>
</feature>
<feature type="chain" id="PRO_0000125713" description="Large ribosomal subunit protein uL1">
    <location>
        <begin position="2"/>
        <end position="233"/>
    </location>
</feature>
<reference key="1">
    <citation type="journal article" date="1987" name="Mol. Gen. Genet.">
        <title>Cloning and DNA sequence determination of the L11 ribosomal protein operon of Serratia marcescens and Proteus vulgaris: translational feedback regulation of the Escherichia coli L11 operon by heterologous L1 proteins.</title>
        <authorList>
            <person name="Sor F."/>
            <person name="Nomura M."/>
        </authorList>
    </citation>
    <scope>NUCLEOTIDE SEQUENCE [GENOMIC DNA]</scope>
    <source>
        <strain>NO3254</strain>
    </source>
</reference>
<name>RL1_PROVU</name>
<keyword id="KW-0678">Repressor</keyword>
<keyword id="KW-0687">Ribonucleoprotein</keyword>
<keyword id="KW-0689">Ribosomal protein</keyword>
<keyword id="KW-0694">RNA-binding</keyword>
<keyword id="KW-0699">rRNA-binding</keyword>
<keyword id="KW-0810">Translation regulation</keyword>
<keyword id="KW-0820">tRNA-binding</keyword>
<comment type="function">
    <text evidence="2">Binds directly to 23S rRNA. The L1 stalk is quite mobile in the ribosome, and is involved in E site tRNA release.</text>
</comment>
<comment type="function">
    <text>Protein L1 is also a translational repressor protein, it controls the translation of the L11 operon by binding to its mRNA.</text>
</comment>
<comment type="subunit">
    <text evidence="2">Part of the 50S ribosomal subunit.</text>
</comment>
<comment type="similarity">
    <text evidence="2">Belongs to the universal ribosomal protein uL1 family.</text>
</comment>
<organism>
    <name type="scientific">Proteus vulgaris</name>
    <dbReference type="NCBI Taxonomy" id="585"/>
    <lineage>
        <taxon>Bacteria</taxon>
        <taxon>Pseudomonadati</taxon>
        <taxon>Pseudomonadota</taxon>
        <taxon>Gammaproteobacteria</taxon>
        <taxon>Enterobacterales</taxon>
        <taxon>Morganellaceae</taxon>
        <taxon>Proteus</taxon>
    </lineage>
</organism>
<proteinExistence type="inferred from homology"/>
<gene>
    <name evidence="2" type="primary">rplA</name>
</gene>
<dbReference type="EMBL" id="X12585">
    <property type="protein sequence ID" value="CAA31098.1"/>
    <property type="molecule type" value="Genomic_DNA"/>
</dbReference>
<dbReference type="PIR" id="S01970">
    <property type="entry name" value="R5EBPV"/>
</dbReference>
<dbReference type="SMR" id="P10054"/>
<dbReference type="STRING" id="585.DR95_2759"/>
<dbReference type="eggNOG" id="COG0081">
    <property type="taxonomic scope" value="Bacteria"/>
</dbReference>
<dbReference type="GO" id="GO:0022625">
    <property type="term" value="C:cytosolic large ribosomal subunit"/>
    <property type="evidence" value="ECO:0007669"/>
    <property type="project" value="TreeGrafter"/>
</dbReference>
<dbReference type="GO" id="GO:0019843">
    <property type="term" value="F:rRNA binding"/>
    <property type="evidence" value="ECO:0007669"/>
    <property type="project" value="UniProtKB-UniRule"/>
</dbReference>
<dbReference type="GO" id="GO:0003735">
    <property type="term" value="F:structural constituent of ribosome"/>
    <property type="evidence" value="ECO:0007669"/>
    <property type="project" value="InterPro"/>
</dbReference>
<dbReference type="GO" id="GO:0000049">
    <property type="term" value="F:tRNA binding"/>
    <property type="evidence" value="ECO:0007669"/>
    <property type="project" value="UniProtKB-KW"/>
</dbReference>
<dbReference type="GO" id="GO:0006417">
    <property type="term" value="P:regulation of translation"/>
    <property type="evidence" value="ECO:0007669"/>
    <property type="project" value="UniProtKB-KW"/>
</dbReference>
<dbReference type="GO" id="GO:0006412">
    <property type="term" value="P:translation"/>
    <property type="evidence" value="ECO:0007669"/>
    <property type="project" value="UniProtKB-UniRule"/>
</dbReference>
<dbReference type="CDD" id="cd00403">
    <property type="entry name" value="Ribosomal_L1"/>
    <property type="match status" value="1"/>
</dbReference>
<dbReference type="FunFam" id="3.40.50.790:FF:000001">
    <property type="entry name" value="50S ribosomal protein L1"/>
    <property type="match status" value="1"/>
</dbReference>
<dbReference type="Gene3D" id="3.30.190.20">
    <property type="match status" value="1"/>
</dbReference>
<dbReference type="Gene3D" id="3.40.50.790">
    <property type="match status" value="1"/>
</dbReference>
<dbReference type="HAMAP" id="MF_01318_B">
    <property type="entry name" value="Ribosomal_uL1_B"/>
    <property type="match status" value="1"/>
</dbReference>
<dbReference type="InterPro" id="IPR005878">
    <property type="entry name" value="Ribosom_uL1_bac-type"/>
</dbReference>
<dbReference type="InterPro" id="IPR002143">
    <property type="entry name" value="Ribosomal_uL1"/>
</dbReference>
<dbReference type="InterPro" id="IPR023674">
    <property type="entry name" value="Ribosomal_uL1-like"/>
</dbReference>
<dbReference type="InterPro" id="IPR028364">
    <property type="entry name" value="Ribosomal_uL1/biogenesis"/>
</dbReference>
<dbReference type="InterPro" id="IPR016095">
    <property type="entry name" value="Ribosomal_uL1_3-a/b-sand"/>
</dbReference>
<dbReference type="InterPro" id="IPR023673">
    <property type="entry name" value="Ribosomal_uL1_CS"/>
</dbReference>
<dbReference type="NCBIfam" id="TIGR01169">
    <property type="entry name" value="rplA_bact"/>
    <property type="match status" value="1"/>
</dbReference>
<dbReference type="PANTHER" id="PTHR36427">
    <property type="entry name" value="54S RIBOSOMAL PROTEIN L1, MITOCHONDRIAL"/>
    <property type="match status" value="1"/>
</dbReference>
<dbReference type="PANTHER" id="PTHR36427:SF3">
    <property type="entry name" value="LARGE RIBOSOMAL SUBUNIT PROTEIN UL1M"/>
    <property type="match status" value="1"/>
</dbReference>
<dbReference type="Pfam" id="PF00687">
    <property type="entry name" value="Ribosomal_L1"/>
    <property type="match status" value="1"/>
</dbReference>
<dbReference type="PIRSF" id="PIRSF002155">
    <property type="entry name" value="Ribosomal_L1"/>
    <property type="match status" value="1"/>
</dbReference>
<dbReference type="SUPFAM" id="SSF56808">
    <property type="entry name" value="Ribosomal protein L1"/>
    <property type="match status" value="1"/>
</dbReference>
<dbReference type="PROSITE" id="PS01199">
    <property type="entry name" value="RIBOSOMAL_L1"/>
    <property type="match status" value="1"/>
</dbReference>
<protein>
    <recommendedName>
        <fullName evidence="2">Large ribosomal subunit protein uL1</fullName>
    </recommendedName>
    <alternativeName>
        <fullName evidence="3">50S ribosomal protein L1</fullName>
    </alternativeName>
</protein>